<feature type="chain" id="PRO_0000140829" description="Phospho-2-dehydro-3-deoxyheptonate aldolase">
    <location>
        <begin position="1"/>
        <end position="366"/>
    </location>
</feature>
<feature type="sequence conflict" description="In Ref. 1; AAA23292." evidence="1" ref="1">
    <original>I</original>
    <variation>T</variation>
    <location>
        <position position="109"/>
    </location>
</feature>
<feature type="sequence conflict" description="In Ref. 1; AAA23292." evidence="1" ref="1">
    <original>R</original>
    <variation>RR</variation>
    <location>
        <position position="181"/>
    </location>
</feature>
<feature type="sequence conflict" description="In Ref. 1; AAA23292." evidence="1" ref="1">
    <original>A</original>
    <variation>T</variation>
    <location>
        <position position="356"/>
    </location>
</feature>
<dbReference type="EC" id="2.5.1.54"/>
<dbReference type="EMBL" id="L07603">
    <property type="protein sequence ID" value="AAA23292.1"/>
    <property type="molecule type" value="Genomic_DNA"/>
</dbReference>
<dbReference type="EMBL" id="BA000036">
    <property type="protein sequence ID" value="BAB98383.1"/>
    <property type="molecule type" value="Genomic_DNA"/>
</dbReference>
<dbReference type="EMBL" id="BX927151">
    <property type="protein sequence ID" value="CAF19696.1"/>
    <property type="molecule type" value="Genomic_DNA"/>
</dbReference>
<dbReference type="PIR" id="I40837">
    <property type="entry name" value="I40837"/>
</dbReference>
<dbReference type="RefSeq" id="NP_600217.1">
    <property type="nucleotide sequence ID" value="NC_003450.3"/>
</dbReference>
<dbReference type="RefSeq" id="WP_011014031.1">
    <property type="nucleotide sequence ID" value="NC_006958.1"/>
</dbReference>
<dbReference type="SMR" id="P35170"/>
<dbReference type="STRING" id="196627.cg1129"/>
<dbReference type="KEGG" id="cgb:cg1129"/>
<dbReference type="KEGG" id="cgl:Cgl0990"/>
<dbReference type="PATRIC" id="fig|196627.13.peg.974"/>
<dbReference type="eggNOG" id="COG0722">
    <property type="taxonomic scope" value="Bacteria"/>
</dbReference>
<dbReference type="HOGENOM" id="CLU_030903_0_1_11"/>
<dbReference type="OrthoDB" id="9807331at2"/>
<dbReference type="BioCyc" id="CORYNE:G18NG-10562-MONOMER"/>
<dbReference type="BRENDA" id="2.5.1.54">
    <property type="organism ID" value="960"/>
</dbReference>
<dbReference type="UniPathway" id="UPA00053">
    <property type="reaction ID" value="UER00084"/>
</dbReference>
<dbReference type="Proteomes" id="UP000000582">
    <property type="component" value="Chromosome"/>
</dbReference>
<dbReference type="Proteomes" id="UP000001009">
    <property type="component" value="Chromosome"/>
</dbReference>
<dbReference type="GO" id="GO:0005737">
    <property type="term" value="C:cytoplasm"/>
    <property type="evidence" value="ECO:0007669"/>
    <property type="project" value="TreeGrafter"/>
</dbReference>
<dbReference type="GO" id="GO:0003849">
    <property type="term" value="F:3-deoxy-7-phosphoheptulonate synthase activity"/>
    <property type="evidence" value="ECO:0007669"/>
    <property type="project" value="UniProtKB-EC"/>
</dbReference>
<dbReference type="GO" id="GO:0008652">
    <property type="term" value="P:amino acid biosynthetic process"/>
    <property type="evidence" value="ECO:0007669"/>
    <property type="project" value="UniProtKB-KW"/>
</dbReference>
<dbReference type="GO" id="GO:0009073">
    <property type="term" value="P:aromatic amino acid family biosynthetic process"/>
    <property type="evidence" value="ECO:0007669"/>
    <property type="project" value="UniProtKB-KW"/>
</dbReference>
<dbReference type="GO" id="GO:0009423">
    <property type="term" value="P:chorismate biosynthetic process"/>
    <property type="evidence" value="ECO:0007669"/>
    <property type="project" value="UniProtKB-UniPathway"/>
</dbReference>
<dbReference type="FunFam" id="3.20.20.70:FF:000005">
    <property type="entry name" value="Phospho-2-dehydro-3-deoxyheptonate aldolase"/>
    <property type="match status" value="1"/>
</dbReference>
<dbReference type="Gene3D" id="3.20.20.70">
    <property type="entry name" value="Aldolase class I"/>
    <property type="match status" value="1"/>
</dbReference>
<dbReference type="InterPro" id="IPR013785">
    <property type="entry name" value="Aldolase_TIM"/>
</dbReference>
<dbReference type="InterPro" id="IPR006218">
    <property type="entry name" value="DAHP1/KDSA"/>
</dbReference>
<dbReference type="InterPro" id="IPR006219">
    <property type="entry name" value="DAHP_synth_1"/>
</dbReference>
<dbReference type="NCBIfam" id="TIGR00034">
    <property type="entry name" value="aroFGH"/>
    <property type="match status" value="1"/>
</dbReference>
<dbReference type="NCBIfam" id="NF009395">
    <property type="entry name" value="PRK12755.1"/>
    <property type="match status" value="1"/>
</dbReference>
<dbReference type="PANTHER" id="PTHR21225">
    <property type="entry name" value="PHOSPHO-2-DEHYDRO-3-DEOXYHEPTONATE ALDOLASE DAHP SYNTHETASE"/>
    <property type="match status" value="1"/>
</dbReference>
<dbReference type="PANTHER" id="PTHR21225:SF12">
    <property type="entry name" value="PHOSPHO-2-DEHYDRO-3-DEOXYHEPTONATE ALDOLASE, TYROSINE-INHIBITED"/>
    <property type="match status" value="1"/>
</dbReference>
<dbReference type="Pfam" id="PF00793">
    <property type="entry name" value="DAHP_synth_1"/>
    <property type="match status" value="1"/>
</dbReference>
<dbReference type="PIRSF" id="PIRSF001361">
    <property type="entry name" value="DAHP_synthase"/>
    <property type="match status" value="1"/>
</dbReference>
<dbReference type="SUPFAM" id="SSF51569">
    <property type="entry name" value="Aldolase"/>
    <property type="match status" value="1"/>
</dbReference>
<proteinExistence type="inferred from homology"/>
<name>AROG_CORGL</name>
<keyword id="KW-0028">Amino-acid biosynthesis</keyword>
<keyword id="KW-0057">Aromatic amino acid biosynthesis</keyword>
<keyword id="KW-1185">Reference proteome</keyword>
<keyword id="KW-0808">Transferase</keyword>
<evidence type="ECO:0000305" key="1"/>
<gene>
    <name type="primary">aroG</name>
    <name type="synonym">aroF</name>
    <name type="ordered locus">Cgl0990</name>
    <name type="ordered locus">cg1129</name>
</gene>
<sequence>MSSPVSLENAASTSNKRVVAFHELPSPTDLIAANPLTPKQASKVEQDRQDIADIFAGDDDRLVVVVGPCSVHDPEAAIDYANRLAPLAKRLDQDLKIVMRVYFEKPRTIVGWKGLINDPHLNETYDIPEGLRIARKVLIDVVNLDLPVGCEFLEPNSPQYYADTVAWGAIGARTTESQVHRQLASGMSMPIGFKNGTDGNIQVAVDAVQAAQNPHFFFGTSDDGALSVVETAGNSNSHIILRGGTSGPNHDAASVEAVVEKLGENARLMIDASHANSGKDHIRQVEVVREIAEQISGGSEAVAGIMIESFLVGGAQNLDPAKLRINGGEGLVYGQSVTDKCIDIDTTIDLLAELAAAVRERRAAAK</sequence>
<comment type="function">
    <text>Stereospecific condensation of phosphoenolpyruvate (PEP) and D-erythrose-4-phosphate (E4P) giving rise to 3-deoxy-D-arabino-heptulosonate-7-phosphate (DAHP).</text>
</comment>
<comment type="catalytic activity">
    <reaction>
        <text>D-erythrose 4-phosphate + phosphoenolpyruvate + H2O = 7-phospho-2-dehydro-3-deoxy-D-arabino-heptonate + phosphate</text>
        <dbReference type="Rhea" id="RHEA:14717"/>
        <dbReference type="ChEBI" id="CHEBI:15377"/>
        <dbReference type="ChEBI" id="CHEBI:16897"/>
        <dbReference type="ChEBI" id="CHEBI:43474"/>
        <dbReference type="ChEBI" id="CHEBI:58394"/>
        <dbReference type="ChEBI" id="CHEBI:58702"/>
        <dbReference type="EC" id="2.5.1.54"/>
    </reaction>
</comment>
<comment type="pathway">
    <text>Metabolic intermediate biosynthesis; chorismate biosynthesis; chorismate from D-erythrose 4-phosphate and phosphoenolpyruvate: step 1/7.</text>
</comment>
<comment type="similarity">
    <text evidence="1">Belongs to the class-I DAHP synthase family.</text>
</comment>
<accession>P35170</accession>
<reference key="1">
    <citation type="journal article" date="1993" name="FEMS Microbiol. Lett.">
        <title>The cloning and nucleotide sequence of a Corynebacterium glutamicum 3-deoxy-D-arabinoheptulosonate-7-phosphate synthase gene.</title>
        <authorList>
            <person name="Chen C.-C."/>
            <person name="Liao C.-C."/>
            <person name="Hsu W.-H."/>
        </authorList>
    </citation>
    <scope>NUCLEOTIDE SEQUENCE [GENOMIC DNA]</scope>
    <source>
        <strain>CCRC 18310</strain>
    </source>
</reference>
<reference key="2">
    <citation type="journal article" date="2003" name="Appl. Microbiol. Biotechnol.">
        <title>The Corynebacterium glutamicum genome: features and impacts on biotechnological processes.</title>
        <authorList>
            <person name="Ikeda M."/>
            <person name="Nakagawa S."/>
        </authorList>
    </citation>
    <scope>NUCLEOTIDE SEQUENCE [LARGE SCALE GENOMIC DNA]</scope>
    <source>
        <strain>ATCC 13032 / DSM 20300 / JCM 1318 / BCRC 11384 / CCUG 27702 / LMG 3730 / NBRC 12168 / NCIMB 10025 / NRRL B-2784 / 534</strain>
    </source>
</reference>
<reference key="3">
    <citation type="journal article" date="2003" name="J. Biotechnol.">
        <title>The complete Corynebacterium glutamicum ATCC 13032 genome sequence and its impact on the production of L-aspartate-derived amino acids and vitamins.</title>
        <authorList>
            <person name="Kalinowski J."/>
            <person name="Bathe B."/>
            <person name="Bartels D."/>
            <person name="Bischoff N."/>
            <person name="Bott M."/>
            <person name="Burkovski A."/>
            <person name="Dusch N."/>
            <person name="Eggeling L."/>
            <person name="Eikmanns B.J."/>
            <person name="Gaigalat L."/>
            <person name="Goesmann A."/>
            <person name="Hartmann M."/>
            <person name="Huthmacher K."/>
            <person name="Kraemer R."/>
            <person name="Linke B."/>
            <person name="McHardy A.C."/>
            <person name="Meyer F."/>
            <person name="Moeckel B."/>
            <person name="Pfefferle W."/>
            <person name="Puehler A."/>
            <person name="Rey D.A."/>
            <person name="Rueckert C."/>
            <person name="Rupp O."/>
            <person name="Sahm H."/>
            <person name="Wendisch V.F."/>
            <person name="Wiegraebe I."/>
            <person name="Tauch A."/>
        </authorList>
    </citation>
    <scope>NUCLEOTIDE SEQUENCE [LARGE SCALE GENOMIC DNA]</scope>
    <source>
        <strain>ATCC 13032 / DSM 20300 / JCM 1318 / BCRC 11384 / CCUG 27702 / LMG 3730 / NBRC 12168 / NCIMB 10025 / NRRL B-2784 / 534</strain>
    </source>
</reference>
<protein>
    <recommendedName>
        <fullName>Phospho-2-dehydro-3-deoxyheptonate aldolase</fullName>
        <ecNumber>2.5.1.54</ecNumber>
    </recommendedName>
    <alternativeName>
        <fullName>3-deoxy-D-arabino-heptulosonate 7-phosphate synthase</fullName>
    </alternativeName>
    <alternativeName>
        <fullName>DAHP synthase</fullName>
    </alternativeName>
    <alternativeName>
        <fullName>Phospho-2-keto-3-deoxyheptonate aldolase</fullName>
    </alternativeName>
</protein>
<organism>
    <name type="scientific">Corynebacterium glutamicum (strain ATCC 13032 / DSM 20300 / JCM 1318 / BCRC 11384 / CCUG 27702 / LMG 3730 / NBRC 12168 / NCIMB 10025 / NRRL B-2784 / 534)</name>
    <dbReference type="NCBI Taxonomy" id="196627"/>
    <lineage>
        <taxon>Bacteria</taxon>
        <taxon>Bacillati</taxon>
        <taxon>Actinomycetota</taxon>
        <taxon>Actinomycetes</taxon>
        <taxon>Mycobacteriales</taxon>
        <taxon>Corynebacteriaceae</taxon>
        <taxon>Corynebacterium</taxon>
    </lineage>
</organism>